<dbReference type="EC" id="7.1.1.-" evidence="2"/>
<dbReference type="EMBL" id="CP000769">
    <property type="protein sequence ID" value="ABS25496.1"/>
    <property type="molecule type" value="Genomic_DNA"/>
</dbReference>
<dbReference type="RefSeq" id="WP_011985602.1">
    <property type="nucleotide sequence ID" value="NC_009675.1"/>
</dbReference>
<dbReference type="SMR" id="A7H9V0"/>
<dbReference type="STRING" id="404589.Anae109_1288"/>
<dbReference type="KEGG" id="afw:Anae109_1288"/>
<dbReference type="eggNOG" id="COG0377">
    <property type="taxonomic scope" value="Bacteria"/>
</dbReference>
<dbReference type="HOGENOM" id="CLU_055737_7_3_7"/>
<dbReference type="OrthoDB" id="9786737at2"/>
<dbReference type="Proteomes" id="UP000006382">
    <property type="component" value="Chromosome"/>
</dbReference>
<dbReference type="GO" id="GO:0005886">
    <property type="term" value="C:plasma membrane"/>
    <property type="evidence" value="ECO:0007669"/>
    <property type="project" value="UniProtKB-SubCell"/>
</dbReference>
<dbReference type="GO" id="GO:0045271">
    <property type="term" value="C:respiratory chain complex I"/>
    <property type="evidence" value="ECO:0007669"/>
    <property type="project" value="TreeGrafter"/>
</dbReference>
<dbReference type="GO" id="GO:0051539">
    <property type="term" value="F:4 iron, 4 sulfur cluster binding"/>
    <property type="evidence" value="ECO:0007669"/>
    <property type="project" value="UniProtKB-KW"/>
</dbReference>
<dbReference type="GO" id="GO:0005506">
    <property type="term" value="F:iron ion binding"/>
    <property type="evidence" value="ECO:0007669"/>
    <property type="project" value="UniProtKB-UniRule"/>
</dbReference>
<dbReference type="GO" id="GO:0008137">
    <property type="term" value="F:NADH dehydrogenase (ubiquinone) activity"/>
    <property type="evidence" value="ECO:0007669"/>
    <property type="project" value="InterPro"/>
</dbReference>
<dbReference type="GO" id="GO:0050136">
    <property type="term" value="F:NADH:ubiquinone reductase (non-electrogenic) activity"/>
    <property type="evidence" value="ECO:0007669"/>
    <property type="project" value="UniProtKB-UniRule"/>
</dbReference>
<dbReference type="GO" id="GO:0048038">
    <property type="term" value="F:quinone binding"/>
    <property type="evidence" value="ECO:0007669"/>
    <property type="project" value="UniProtKB-KW"/>
</dbReference>
<dbReference type="GO" id="GO:0009060">
    <property type="term" value="P:aerobic respiration"/>
    <property type="evidence" value="ECO:0007669"/>
    <property type="project" value="TreeGrafter"/>
</dbReference>
<dbReference type="GO" id="GO:0015990">
    <property type="term" value="P:electron transport coupled proton transport"/>
    <property type="evidence" value="ECO:0007669"/>
    <property type="project" value="TreeGrafter"/>
</dbReference>
<dbReference type="FunFam" id="3.40.50.12280:FF:000002">
    <property type="entry name" value="NADH-quinone oxidoreductase subunit B"/>
    <property type="match status" value="1"/>
</dbReference>
<dbReference type="Gene3D" id="3.40.50.12280">
    <property type="match status" value="1"/>
</dbReference>
<dbReference type="HAMAP" id="MF_01356">
    <property type="entry name" value="NDH1_NuoB"/>
    <property type="match status" value="1"/>
</dbReference>
<dbReference type="InterPro" id="IPR006137">
    <property type="entry name" value="NADH_UbQ_OxRdtase-like_20kDa"/>
</dbReference>
<dbReference type="InterPro" id="IPR006138">
    <property type="entry name" value="NADH_UQ_OxRdtase_20Kd_su"/>
</dbReference>
<dbReference type="NCBIfam" id="TIGR01957">
    <property type="entry name" value="nuoB_fam"/>
    <property type="match status" value="1"/>
</dbReference>
<dbReference type="NCBIfam" id="NF005012">
    <property type="entry name" value="PRK06411.1"/>
    <property type="match status" value="1"/>
</dbReference>
<dbReference type="NCBIfam" id="NF011393">
    <property type="entry name" value="PRK14818.1"/>
    <property type="match status" value="1"/>
</dbReference>
<dbReference type="PANTHER" id="PTHR11995">
    <property type="entry name" value="NADH DEHYDROGENASE"/>
    <property type="match status" value="1"/>
</dbReference>
<dbReference type="PANTHER" id="PTHR11995:SF14">
    <property type="entry name" value="NADH DEHYDROGENASE [UBIQUINONE] IRON-SULFUR PROTEIN 7, MITOCHONDRIAL"/>
    <property type="match status" value="1"/>
</dbReference>
<dbReference type="Pfam" id="PF01058">
    <property type="entry name" value="Oxidored_q6"/>
    <property type="match status" value="1"/>
</dbReference>
<dbReference type="SUPFAM" id="SSF56770">
    <property type="entry name" value="HydA/Nqo6-like"/>
    <property type="match status" value="1"/>
</dbReference>
<dbReference type="PROSITE" id="PS01150">
    <property type="entry name" value="COMPLEX1_20K"/>
    <property type="match status" value="1"/>
</dbReference>
<name>NUOB1_ANADF</name>
<proteinExistence type="inferred from homology"/>
<keyword id="KW-0004">4Fe-4S</keyword>
<keyword id="KW-0997">Cell inner membrane</keyword>
<keyword id="KW-1003">Cell membrane</keyword>
<keyword id="KW-0408">Iron</keyword>
<keyword id="KW-0411">Iron-sulfur</keyword>
<keyword id="KW-0472">Membrane</keyword>
<keyword id="KW-0479">Metal-binding</keyword>
<keyword id="KW-0520">NAD</keyword>
<keyword id="KW-0874">Quinone</keyword>
<keyword id="KW-1185">Reference proteome</keyword>
<keyword id="KW-1278">Translocase</keyword>
<keyword id="KW-0813">Transport</keyword>
<keyword id="KW-0830">Ubiquinone</keyword>
<gene>
    <name evidence="2" type="primary">nuoB1</name>
    <name type="ordered locus">Anae109_1288</name>
</gene>
<comment type="function">
    <text evidence="1">NDH-1 shuttles electrons from NADH, via FMN and iron-sulfur (Fe-S) centers, to quinones in the respiratory chain. Couples the redox reaction to proton translocation (for every two electrons transferred, four hydrogen ions are translocated across the cytoplasmic membrane), and thus conserves the redox energy in a proton gradient (By similarity).</text>
</comment>
<comment type="catalytic activity">
    <reaction evidence="2">
        <text>a quinone + NADH + 5 H(+)(in) = a quinol + NAD(+) + 4 H(+)(out)</text>
        <dbReference type="Rhea" id="RHEA:57888"/>
        <dbReference type="ChEBI" id="CHEBI:15378"/>
        <dbReference type="ChEBI" id="CHEBI:24646"/>
        <dbReference type="ChEBI" id="CHEBI:57540"/>
        <dbReference type="ChEBI" id="CHEBI:57945"/>
        <dbReference type="ChEBI" id="CHEBI:132124"/>
    </reaction>
</comment>
<comment type="cofactor">
    <cofactor evidence="2">
        <name>[4Fe-4S] cluster</name>
        <dbReference type="ChEBI" id="CHEBI:49883"/>
    </cofactor>
    <text evidence="2">Binds 1 [4Fe-4S] cluster.</text>
</comment>
<comment type="subunit">
    <text evidence="2">NDH-1 is composed of 14 different subunits. Subunits NuoB, C, D, E, F, and G constitute the peripheral sector of the complex.</text>
</comment>
<comment type="subcellular location">
    <subcellularLocation>
        <location evidence="2">Cell inner membrane</location>
        <topology evidence="2">Peripheral membrane protein</topology>
        <orientation evidence="2">Cytoplasmic side</orientation>
    </subcellularLocation>
</comment>
<comment type="similarity">
    <text evidence="2">Belongs to the complex I 20 kDa subunit family.</text>
</comment>
<sequence>MTARTMDAGTGDVTLFHTSQLDKLINMARENSLWYLLFGLACCGIELMQFGGPRADVMRFGAIPRASPRQADFMIVAGTLTYKMAERAKLLYDQMPEPKYVISMGSCSNCGGLFQLGYSVCKGVDKVIPVDVYVPGCPPRPEALTEGLIRLQELIRSEPWATKRRPAKGSAA</sequence>
<protein>
    <recommendedName>
        <fullName evidence="2">NADH-quinone oxidoreductase subunit B 1</fullName>
        <ecNumber evidence="2">7.1.1.-</ecNumber>
    </recommendedName>
    <alternativeName>
        <fullName evidence="2">NADH dehydrogenase I subunit B 1</fullName>
    </alternativeName>
    <alternativeName>
        <fullName evidence="2">NDH-1 subunit B 1</fullName>
    </alternativeName>
</protein>
<feature type="chain" id="PRO_0000358344" description="NADH-quinone oxidoreductase subunit B 1">
    <location>
        <begin position="1"/>
        <end position="172"/>
    </location>
</feature>
<feature type="binding site" evidence="2">
    <location>
        <position position="42"/>
    </location>
    <ligand>
        <name>[4Fe-4S] cluster</name>
        <dbReference type="ChEBI" id="CHEBI:49883"/>
    </ligand>
</feature>
<feature type="binding site" evidence="2">
    <location>
        <position position="43"/>
    </location>
    <ligand>
        <name>[4Fe-4S] cluster</name>
        <dbReference type="ChEBI" id="CHEBI:49883"/>
    </ligand>
</feature>
<feature type="binding site" evidence="2">
    <location>
        <position position="107"/>
    </location>
    <ligand>
        <name>[4Fe-4S] cluster</name>
        <dbReference type="ChEBI" id="CHEBI:49883"/>
    </ligand>
</feature>
<feature type="binding site" evidence="2">
    <location>
        <position position="137"/>
    </location>
    <ligand>
        <name>[4Fe-4S] cluster</name>
        <dbReference type="ChEBI" id="CHEBI:49883"/>
    </ligand>
</feature>
<evidence type="ECO:0000250" key="1"/>
<evidence type="ECO:0000255" key="2">
    <source>
        <dbReference type="HAMAP-Rule" id="MF_01356"/>
    </source>
</evidence>
<accession>A7H9V0</accession>
<reference key="1">
    <citation type="journal article" date="2015" name="Genome Announc.">
        <title>Complete genome sequence of Anaeromyxobacter sp. Fw109-5, an anaerobic, metal-reducing bacterium isolated from a contaminated subsurface environment.</title>
        <authorList>
            <person name="Hwang C."/>
            <person name="Copeland A."/>
            <person name="Lucas S."/>
            <person name="Lapidus A."/>
            <person name="Barry K."/>
            <person name="Glavina Del Rio T."/>
            <person name="Dalin E."/>
            <person name="Tice H."/>
            <person name="Pitluck S."/>
            <person name="Sims D."/>
            <person name="Brettin T."/>
            <person name="Bruce D.C."/>
            <person name="Detter J.C."/>
            <person name="Han C.S."/>
            <person name="Schmutz J."/>
            <person name="Larimer F.W."/>
            <person name="Land M.L."/>
            <person name="Hauser L.J."/>
            <person name="Kyrpides N."/>
            <person name="Lykidis A."/>
            <person name="Richardson P."/>
            <person name="Belieav A."/>
            <person name="Sanford R.A."/>
            <person name="Loeffler F.E."/>
            <person name="Fields M.W."/>
        </authorList>
    </citation>
    <scope>NUCLEOTIDE SEQUENCE [LARGE SCALE GENOMIC DNA]</scope>
    <source>
        <strain>Fw109-5</strain>
    </source>
</reference>
<organism>
    <name type="scientific">Anaeromyxobacter sp. (strain Fw109-5)</name>
    <dbReference type="NCBI Taxonomy" id="404589"/>
    <lineage>
        <taxon>Bacteria</taxon>
        <taxon>Pseudomonadati</taxon>
        <taxon>Myxococcota</taxon>
        <taxon>Myxococcia</taxon>
        <taxon>Myxococcales</taxon>
        <taxon>Cystobacterineae</taxon>
        <taxon>Anaeromyxobacteraceae</taxon>
        <taxon>Anaeromyxobacter</taxon>
    </lineage>
</organism>